<comment type="function">
    <text evidence="1">Catalyzes the conversion of glucosamine-6-phosphate to glucosamine-1-phosphate.</text>
</comment>
<comment type="catalytic activity">
    <reaction evidence="1">
        <text>alpha-D-glucosamine 1-phosphate = D-glucosamine 6-phosphate</text>
        <dbReference type="Rhea" id="RHEA:23424"/>
        <dbReference type="ChEBI" id="CHEBI:58516"/>
        <dbReference type="ChEBI" id="CHEBI:58725"/>
        <dbReference type="EC" id="5.4.2.10"/>
    </reaction>
</comment>
<comment type="cofactor">
    <cofactor evidence="1">
        <name>Mg(2+)</name>
        <dbReference type="ChEBI" id="CHEBI:18420"/>
    </cofactor>
    <text evidence="1">Binds 1 Mg(2+) ion per subunit.</text>
</comment>
<comment type="PTM">
    <text evidence="1">Activated by phosphorylation.</text>
</comment>
<comment type="similarity">
    <text evidence="1">Belongs to the phosphohexose mutase family.</text>
</comment>
<evidence type="ECO:0000255" key="1">
    <source>
        <dbReference type="HAMAP-Rule" id="MF_01554"/>
    </source>
</evidence>
<dbReference type="EC" id="5.4.2.10" evidence="1"/>
<dbReference type="EMBL" id="CP000100">
    <property type="protein sequence ID" value="ABB58162.1"/>
    <property type="molecule type" value="Genomic_DNA"/>
</dbReference>
<dbReference type="RefSeq" id="WP_011378332.1">
    <property type="nucleotide sequence ID" value="NZ_JACJTX010000001.1"/>
</dbReference>
<dbReference type="SMR" id="Q31LA7"/>
<dbReference type="STRING" id="1140.Synpcc7942_2132"/>
<dbReference type="PaxDb" id="1140-Synpcc7942_2132"/>
<dbReference type="GeneID" id="72431010"/>
<dbReference type="KEGG" id="syf:Synpcc7942_2132"/>
<dbReference type="eggNOG" id="COG1109">
    <property type="taxonomic scope" value="Bacteria"/>
</dbReference>
<dbReference type="HOGENOM" id="CLU_016950_7_0_3"/>
<dbReference type="OrthoDB" id="9806956at2"/>
<dbReference type="BioCyc" id="SYNEL:SYNPCC7942_2132-MONOMER"/>
<dbReference type="Proteomes" id="UP000889800">
    <property type="component" value="Chromosome"/>
</dbReference>
<dbReference type="GO" id="GO:0005829">
    <property type="term" value="C:cytosol"/>
    <property type="evidence" value="ECO:0007669"/>
    <property type="project" value="TreeGrafter"/>
</dbReference>
<dbReference type="GO" id="GO:0000287">
    <property type="term" value="F:magnesium ion binding"/>
    <property type="evidence" value="ECO:0007669"/>
    <property type="project" value="UniProtKB-UniRule"/>
</dbReference>
<dbReference type="GO" id="GO:0008966">
    <property type="term" value="F:phosphoglucosamine mutase activity"/>
    <property type="evidence" value="ECO:0007669"/>
    <property type="project" value="UniProtKB-UniRule"/>
</dbReference>
<dbReference type="GO" id="GO:0004615">
    <property type="term" value="F:phosphomannomutase activity"/>
    <property type="evidence" value="ECO:0007669"/>
    <property type="project" value="TreeGrafter"/>
</dbReference>
<dbReference type="GO" id="GO:0005975">
    <property type="term" value="P:carbohydrate metabolic process"/>
    <property type="evidence" value="ECO:0007669"/>
    <property type="project" value="InterPro"/>
</dbReference>
<dbReference type="GO" id="GO:0009252">
    <property type="term" value="P:peptidoglycan biosynthetic process"/>
    <property type="evidence" value="ECO:0007669"/>
    <property type="project" value="TreeGrafter"/>
</dbReference>
<dbReference type="GO" id="GO:0006048">
    <property type="term" value="P:UDP-N-acetylglucosamine biosynthetic process"/>
    <property type="evidence" value="ECO:0007669"/>
    <property type="project" value="TreeGrafter"/>
</dbReference>
<dbReference type="CDD" id="cd05802">
    <property type="entry name" value="GlmM"/>
    <property type="match status" value="1"/>
</dbReference>
<dbReference type="FunFam" id="3.30.310.50:FF:000001">
    <property type="entry name" value="Phosphoglucosamine mutase"/>
    <property type="match status" value="1"/>
</dbReference>
<dbReference type="FunFam" id="3.40.120.10:FF:000001">
    <property type="entry name" value="Phosphoglucosamine mutase"/>
    <property type="match status" value="1"/>
</dbReference>
<dbReference type="FunFam" id="3.40.120.10:FF:000002">
    <property type="entry name" value="Phosphoglucosamine mutase"/>
    <property type="match status" value="1"/>
</dbReference>
<dbReference type="Gene3D" id="3.40.120.10">
    <property type="entry name" value="Alpha-D-Glucose-1,6-Bisphosphate, subunit A, domain 3"/>
    <property type="match status" value="3"/>
</dbReference>
<dbReference type="Gene3D" id="3.30.310.50">
    <property type="entry name" value="Alpha-D-phosphohexomutase, C-terminal domain"/>
    <property type="match status" value="1"/>
</dbReference>
<dbReference type="HAMAP" id="MF_01554_B">
    <property type="entry name" value="GlmM_B"/>
    <property type="match status" value="1"/>
</dbReference>
<dbReference type="InterPro" id="IPR005844">
    <property type="entry name" value="A-D-PHexomutase_a/b/a-I"/>
</dbReference>
<dbReference type="InterPro" id="IPR016055">
    <property type="entry name" value="A-D-PHexomutase_a/b/a-I/II/III"/>
</dbReference>
<dbReference type="InterPro" id="IPR005845">
    <property type="entry name" value="A-D-PHexomutase_a/b/a-II"/>
</dbReference>
<dbReference type="InterPro" id="IPR005846">
    <property type="entry name" value="A-D-PHexomutase_a/b/a-III"/>
</dbReference>
<dbReference type="InterPro" id="IPR005843">
    <property type="entry name" value="A-D-PHexomutase_C"/>
</dbReference>
<dbReference type="InterPro" id="IPR036900">
    <property type="entry name" value="A-D-PHexomutase_C_sf"/>
</dbReference>
<dbReference type="InterPro" id="IPR016066">
    <property type="entry name" value="A-D-PHexomutase_CS"/>
</dbReference>
<dbReference type="InterPro" id="IPR005841">
    <property type="entry name" value="Alpha-D-phosphohexomutase_SF"/>
</dbReference>
<dbReference type="InterPro" id="IPR006352">
    <property type="entry name" value="GlmM_bact"/>
</dbReference>
<dbReference type="InterPro" id="IPR050060">
    <property type="entry name" value="Phosphoglucosamine_mutase"/>
</dbReference>
<dbReference type="NCBIfam" id="TIGR01455">
    <property type="entry name" value="glmM"/>
    <property type="match status" value="1"/>
</dbReference>
<dbReference type="PANTHER" id="PTHR42946:SF1">
    <property type="entry name" value="PHOSPHOGLUCOMUTASE (ALPHA-D-GLUCOSE-1,6-BISPHOSPHATE-DEPENDENT)"/>
    <property type="match status" value="1"/>
</dbReference>
<dbReference type="PANTHER" id="PTHR42946">
    <property type="entry name" value="PHOSPHOHEXOSE MUTASE"/>
    <property type="match status" value="1"/>
</dbReference>
<dbReference type="Pfam" id="PF02878">
    <property type="entry name" value="PGM_PMM_I"/>
    <property type="match status" value="1"/>
</dbReference>
<dbReference type="Pfam" id="PF02879">
    <property type="entry name" value="PGM_PMM_II"/>
    <property type="match status" value="1"/>
</dbReference>
<dbReference type="Pfam" id="PF02880">
    <property type="entry name" value="PGM_PMM_III"/>
    <property type="match status" value="1"/>
</dbReference>
<dbReference type="Pfam" id="PF00408">
    <property type="entry name" value="PGM_PMM_IV"/>
    <property type="match status" value="1"/>
</dbReference>
<dbReference type="PRINTS" id="PR00509">
    <property type="entry name" value="PGMPMM"/>
</dbReference>
<dbReference type="SUPFAM" id="SSF55957">
    <property type="entry name" value="Phosphoglucomutase, C-terminal domain"/>
    <property type="match status" value="1"/>
</dbReference>
<dbReference type="SUPFAM" id="SSF53738">
    <property type="entry name" value="Phosphoglucomutase, first 3 domains"/>
    <property type="match status" value="3"/>
</dbReference>
<dbReference type="PROSITE" id="PS00710">
    <property type="entry name" value="PGM_PMM"/>
    <property type="match status" value="1"/>
</dbReference>
<gene>
    <name evidence="1" type="primary">glmM</name>
    <name type="ordered locus">Synpcc7942_2132</name>
</gene>
<protein>
    <recommendedName>
        <fullName evidence="1">Phosphoglucosamine mutase</fullName>
        <ecNumber evidence="1">5.4.2.10</ecNumber>
    </recommendedName>
</protein>
<proteinExistence type="inferred from homology"/>
<sequence length="472" mass="50439">MVSATRWETAIEVTPWIAAIAEQVPLFGTDGIRGRVGEHLTAPLAQQVGFWTGQVLRQAGGDRGPVVVGQDSRNSSNMLAMALSSGLAAAGVEVLHLGLCPTPGVAYLTHHSEAIGGVMISASHNPPGDNGIKVFGADGSKLDRQLQAAIEAGLRGQQTSLPATTWGQHYYQPQLADHYQAAIAQSLGQRANLQGLKIVLDLAWGAAALLAPRLFRELGAEVIALHDLPDGNQINVNCGSTHLARLQAAVLEQGADMGFAFDGDADRVLAVDGRGRSVDGDHILFLWGRELEQQQQLPGQAIVTTVMANLGFERAWQAVGGEFVRTAVGDQYVQAEMQARGAMLGGEQSGHILCRHYALTGDGTLTAAHVAALVQASGVSLADLVDQSFRPYPQLLRNVRVEDRDRRCNWQNCAALTQAIAAAETDMGDRGRVLVRASGTEPLLRIMVEAEEAQQVEHWTTHLVQVAESHLL</sequence>
<organism>
    <name type="scientific">Synechococcus elongatus (strain ATCC 33912 / PCC 7942 / FACHB-805)</name>
    <name type="common">Anacystis nidulans R2</name>
    <dbReference type="NCBI Taxonomy" id="1140"/>
    <lineage>
        <taxon>Bacteria</taxon>
        <taxon>Bacillati</taxon>
        <taxon>Cyanobacteriota</taxon>
        <taxon>Cyanophyceae</taxon>
        <taxon>Synechococcales</taxon>
        <taxon>Synechococcaceae</taxon>
        <taxon>Synechococcus</taxon>
    </lineage>
</organism>
<name>GLMM_SYNE7</name>
<reference key="1">
    <citation type="submission" date="2005-08" db="EMBL/GenBank/DDBJ databases">
        <title>Complete sequence of chromosome 1 of Synechococcus elongatus PCC 7942.</title>
        <authorList>
            <consortium name="US DOE Joint Genome Institute"/>
            <person name="Copeland A."/>
            <person name="Lucas S."/>
            <person name="Lapidus A."/>
            <person name="Barry K."/>
            <person name="Detter J.C."/>
            <person name="Glavina T."/>
            <person name="Hammon N."/>
            <person name="Israni S."/>
            <person name="Pitluck S."/>
            <person name="Schmutz J."/>
            <person name="Larimer F."/>
            <person name="Land M."/>
            <person name="Kyrpides N."/>
            <person name="Lykidis A."/>
            <person name="Golden S."/>
            <person name="Richardson P."/>
        </authorList>
    </citation>
    <scope>NUCLEOTIDE SEQUENCE [LARGE SCALE GENOMIC DNA]</scope>
    <source>
        <strain>ATCC 33912 / PCC 7942 / FACHB-805</strain>
    </source>
</reference>
<feature type="chain" id="PRO_0000305685" description="Phosphoglucosamine mutase">
    <location>
        <begin position="1"/>
        <end position="472"/>
    </location>
</feature>
<feature type="active site" description="Phosphoserine intermediate" evidence="1">
    <location>
        <position position="123"/>
    </location>
</feature>
<feature type="binding site" description="via phosphate group" evidence="1">
    <location>
        <position position="123"/>
    </location>
    <ligand>
        <name>Mg(2+)</name>
        <dbReference type="ChEBI" id="CHEBI:18420"/>
    </ligand>
</feature>
<feature type="binding site" evidence="1">
    <location>
        <position position="262"/>
    </location>
    <ligand>
        <name>Mg(2+)</name>
        <dbReference type="ChEBI" id="CHEBI:18420"/>
    </ligand>
</feature>
<feature type="binding site" evidence="1">
    <location>
        <position position="264"/>
    </location>
    <ligand>
        <name>Mg(2+)</name>
        <dbReference type="ChEBI" id="CHEBI:18420"/>
    </ligand>
</feature>
<feature type="binding site" evidence="1">
    <location>
        <position position="266"/>
    </location>
    <ligand>
        <name>Mg(2+)</name>
        <dbReference type="ChEBI" id="CHEBI:18420"/>
    </ligand>
</feature>
<feature type="modified residue" description="Phosphoserine" evidence="1">
    <location>
        <position position="123"/>
    </location>
</feature>
<keyword id="KW-0413">Isomerase</keyword>
<keyword id="KW-0460">Magnesium</keyword>
<keyword id="KW-0479">Metal-binding</keyword>
<keyword id="KW-0597">Phosphoprotein</keyword>
<keyword id="KW-1185">Reference proteome</keyword>
<accession>Q31LA7</accession>